<keyword id="KW-0963">Cytoplasm</keyword>
<keyword id="KW-0396">Initiation factor</keyword>
<keyword id="KW-0648">Protein biosynthesis</keyword>
<keyword id="KW-1185">Reference proteome</keyword>
<name>EIF3L_DROSI</name>
<protein>
    <recommendedName>
        <fullName evidence="1">Eukaryotic translation initiation factor 3 subunit L</fullName>
        <shortName evidence="1">eIF3l</shortName>
    </recommendedName>
</protein>
<accession>B4QR64</accession>
<reference key="1">
    <citation type="journal article" date="2007" name="Nature">
        <title>Evolution of genes and genomes on the Drosophila phylogeny.</title>
        <authorList>
            <consortium name="Drosophila 12 genomes consortium"/>
        </authorList>
    </citation>
    <scope>NUCLEOTIDE SEQUENCE [LARGE SCALE GENOMIC DNA]</scope>
</reference>
<feature type="chain" id="PRO_0000364250" description="Eukaryotic translation initiation factor 3 subunit L">
    <location>
        <begin position="1"/>
        <end position="539"/>
    </location>
</feature>
<feature type="domain" description="PCI" evidence="2">
    <location>
        <begin position="306"/>
        <end position="514"/>
    </location>
</feature>
<sequence length="539" mass="63222">MYGGDEYATNSEYYDDYAHTGDPQLDMEYERNYYAARMPDNVKYFLINFCQAIKEGNLYDIQNMYENTFPQISDHHFDKTAWPEEQEVAAIVDNDKVFLILYKELYYRHIHARIPGGPKLEQRINSFFNYCDFFNLIISAQNPVMLELPDIWLWELVDEFVYQFQNFAQYRARLTEKSQDEIQQLCVNHSNEWSILCILNVLHSLVDISNIKKQLEAISQGVDPQTVAGDFGKLSFYKMLGYFSLVGLLRVHSLLGDYYQAIKVLEPIEIHKKSAYSHIPACQISTSYYVGFAYMMMRRYADAIRTFSDILLYIQRTKQLYSTRSYQNDQINKQAEQMYHLLAICLVLHPQCIDESIQQVLREKNYHDAMFKMQCGDLEVFKSFFVFACPRFVSPCPPAVDAPMDDYVKDPMEHQLLVFMDEVRQQKDLPTTRSYLKLYTTLPLTKLASFIDPNASEDDVSKLLIRLLCFKHKMRNLVWSKGPSGLEGTFKSGSELDFYIDDDMIHIADTKVSHRYGDFFVRKILKFNDLNRKLKNINI</sequence>
<dbReference type="EMBL" id="CM000363">
    <property type="protein sequence ID" value="EDX10194.1"/>
    <property type="molecule type" value="Genomic_DNA"/>
</dbReference>
<dbReference type="SMR" id="B4QR64"/>
<dbReference type="STRING" id="7240.B4QR64"/>
<dbReference type="EnsemblMetazoa" id="FBtr0212655">
    <property type="protein sequence ID" value="FBpp0211147"/>
    <property type="gene ID" value="FBgn0184472"/>
</dbReference>
<dbReference type="EnsemblMetazoa" id="XM_002084573.4">
    <property type="protein sequence ID" value="XP_002084609.1"/>
    <property type="gene ID" value="LOC6737781"/>
</dbReference>
<dbReference type="GeneID" id="6737781"/>
<dbReference type="CTD" id="51386"/>
<dbReference type="HOGENOM" id="CLU_029210_0_1_1"/>
<dbReference type="OMA" id="AGWFIRN"/>
<dbReference type="OrthoDB" id="15082at2759"/>
<dbReference type="PhylomeDB" id="B4QR64"/>
<dbReference type="Proteomes" id="UP000000304">
    <property type="component" value="Chromosome 3L"/>
</dbReference>
<dbReference type="Bgee" id="FBgn0184472">
    <property type="expression patterns" value="Expressed in embryo and 3 other cell types or tissues"/>
</dbReference>
<dbReference type="GO" id="GO:0016282">
    <property type="term" value="C:eukaryotic 43S preinitiation complex"/>
    <property type="evidence" value="ECO:0007669"/>
    <property type="project" value="UniProtKB-UniRule"/>
</dbReference>
<dbReference type="GO" id="GO:0033290">
    <property type="term" value="C:eukaryotic 48S preinitiation complex"/>
    <property type="evidence" value="ECO:0007669"/>
    <property type="project" value="UniProtKB-UniRule"/>
</dbReference>
<dbReference type="GO" id="GO:0005852">
    <property type="term" value="C:eukaryotic translation initiation factor 3 complex"/>
    <property type="evidence" value="ECO:0007669"/>
    <property type="project" value="UniProtKB-UniRule"/>
</dbReference>
<dbReference type="GO" id="GO:0003743">
    <property type="term" value="F:translation initiation factor activity"/>
    <property type="evidence" value="ECO:0007669"/>
    <property type="project" value="UniProtKB-UniRule"/>
</dbReference>
<dbReference type="GO" id="GO:0001732">
    <property type="term" value="P:formation of cytoplasmic translation initiation complex"/>
    <property type="evidence" value="ECO:0007669"/>
    <property type="project" value="UniProtKB-UniRule"/>
</dbReference>
<dbReference type="HAMAP" id="MF_03011">
    <property type="entry name" value="eIF3l"/>
    <property type="match status" value="1"/>
</dbReference>
<dbReference type="InterPro" id="IPR019382">
    <property type="entry name" value="eIF3l"/>
</dbReference>
<dbReference type="InterPro" id="IPR000717">
    <property type="entry name" value="PCI_dom"/>
</dbReference>
<dbReference type="InterPro" id="IPR011990">
    <property type="entry name" value="TPR-like_helical_dom_sf"/>
</dbReference>
<dbReference type="PANTHER" id="PTHR13242">
    <property type="entry name" value="EUKARYOTIC TRANSLATION INITIATION FACTOR 3"/>
    <property type="match status" value="1"/>
</dbReference>
<dbReference type="PANTHER" id="PTHR13242:SF0">
    <property type="entry name" value="EUKARYOTIC TRANSLATION INITIATION FACTOR 3 SUBUNIT L"/>
    <property type="match status" value="1"/>
</dbReference>
<dbReference type="Pfam" id="PF10255">
    <property type="entry name" value="Paf67"/>
    <property type="match status" value="1"/>
</dbReference>
<dbReference type="SUPFAM" id="SSF48452">
    <property type="entry name" value="TPR-like"/>
    <property type="match status" value="1"/>
</dbReference>
<dbReference type="PROSITE" id="PS50250">
    <property type="entry name" value="PCI"/>
    <property type="match status" value="1"/>
</dbReference>
<evidence type="ECO:0000255" key="1">
    <source>
        <dbReference type="HAMAP-Rule" id="MF_03011"/>
    </source>
</evidence>
<evidence type="ECO:0000255" key="2">
    <source>
        <dbReference type="PROSITE-ProRule" id="PRU01185"/>
    </source>
</evidence>
<gene>
    <name type="ORF">GD12745</name>
</gene>
<proteinExistence type="inferred from homology"/>
<comment type="function">
    <text evidence="1">Component of the eukaryotic translation initiation factor 3 (eIF-3) complex, which is involved in protein synthesis of a specialized repertoire of mRNAs and, together with other initiation factors, stimulates binding of mRNA and methionyl-tRNAi to the 40S ribosome. The eIF-3 complex specifically targets and initiates translation of a subset of mRNAs involved in cell proliferation.</text>
</comment>
<comment type="subunit">
    <text evidence="1">Component of the eukaryotic translation initiation factor 3 (eIF-3) complex. The eIF-3 complex interacts with pix.</text>
</comment>
<comment type="subcellular location">
    <subcellularLocation>
        <location evidence="1">Cytoplasm</location>
    </subcellularLocation>
</comment>
<comment type="similarity">
    <text evidence="1">Belongs to the eIF-3 subunit L family.</text>
</comment>
<organism>
    <name type="scientific">Drosophila simulans</name>
    <name type="common">Fruit fly</name>
    <dbReference type="NCBI Taxonomy" id="7240"/>
    <lineage>
        <taxon>Eukaryota</taxon>
        <taxon>Metazoa</taxon>
        <taxon>Ecdysozoa</taxon>
        <taxon>Arthropoda</taxon>
        <taxon>Hexapoda</taxon>
        <taxon>Insecta</taxon>
        <taxon>Pterygota</taxon>
        <taxon>Neoptera</taxon>
        <taxon>Endopterygota</taxon>
        <taxon>Diptera</taxon>
        <taxon>Brachycera</taxon>
        <taxon>Muscomorpha</taxon>
        <taxon>Ephydroidea</taxon>
        <taxon>Drosophilidae</taxon>
        <taxon>Drosophila</taxon>
        <taxon>Sophophora</taxon>
    </lineage>
</organism>